<feature type="chain" id="PRO_0000276367" description="Large ribosomal subunit protein uL14c">
    <location>
        <begin position="1"/>
        <end position="123"/>
    </location>
</feature>
<organism>
    <name type="scientific">Sorghum bicolor</name>
    <name type="common">Sorghum</name>
    <name type="synonym">Sorghum vulgare</name>
    <dbReference type="NCBI Taxonomy" id="4558"/>
    <lineage>
        <taxon>Eukaryota</taxon>
        <taxon>Viridiplantae</taxon>
        <taxon>Streptophyta</taxon>
        <taxon>Embryophyta</taxon>
        <taxon>Tracheophyta</taxon>
        <taxon>Spermatophyta</taxon>
        <taxon>Magnoliopsida</taxon>
        <taxon>Liliopsida</taxon>
        <taxon>Poales</taxon>
        <taxon>Poaceae</taxon>
        <taxon>PACMAD clade</taxon>
        <taxon>Panicoideae</taxon>
        <taxon>Andropogonodae</taxon>
        <taxon>Andropogoneae</taxon>
        <taxon>Sorghinae</taxon>
        <taxon>Sorghum</taxon>
    </lineage>
</organism>
<dbReference type="EMBL" id="EF115542">
    <property type="protein sequence ID" value="ABK79532.1"/>
    <property type="molecule type" value="Genomic_DNA"/>
</dbReference>
<dbReference type="RefSeq" id="YP_899444.1">
    <property type="nucleotide sequence ID" value="NC_008602.1"/>
</dbReference>
<dbReference type="SMR" id="A1E9W1"/>
<dbReference type="FunCoup" id="A1E9W1">
    <property type="interactions" value="320"/>
</dbReference>
<dbReference type="STRING" id="4558.A1E9W1"/>
<dbReference type="GeneID" id="4549088"/>
<dbReference type="KEGG" id="sbi:4549088"/>
<dbReference type="InParanoid" id="A1E9W1"/>
<dbReference type="OrthoDB" id="733561at2759"/>
<dbReference type="Proteomes" id="UP000000768">
    <property type="component" value="Chloroplast"/>
</dbReference>
<dbReference type="ExpressionAtlas" id="A1E9W1">
    <property type="expression patterns" value="baseline"/>
</dbReference>
<dbReference type="GO" id="GO:0009507">
    <property type="term" value="C:chloroplast"/>
    <property type="evidence" value="ECO:0007669"/>
    <property type="project" value="UniProtKB-SubCell"/>
</dbReference>
<dbReference type="GO" id="GO:0022625">
    <property type="term" value="C:cytosolic large ribosomal subunit"/>
    <property type="evidence" value="ECO:0000318"/>
    <property type="project" value="GO_Central"/>
</dbReference>
<dbReference type="GO" id="GO:0070180">
    <property type="term" value="F:large ribosomal subunit rRNA binding"/>
    <property type="evidence" value="ECO:0000318"/>
    <property type="project" value="GO_Central"/>
</dbReference>
<dbReference type="GO" id="GO:0003735">
    <property type="term" value="F:structural constituent of ribosome"/>
    <property type="evidence" value="ECO:0000318"/>
    <property type="project" value="GO_Central"/>
</dbReference>
<dbReference type="GO" id="GO:0006412">
    <property type="term" value="P:translation"/>
    <property type="evidence" value="ECO:0007669"/>
    <property type="project" value="UniProtKB-UniRule"/>
</dbReference>
<dbReference type="CDD" id="cd00337">
    <property type="entry name" value="Ribosomal_uL14"/>
    <property type="match status" value="1"/>
</dbReference>
<dbReference type="FunFam" id="2.40.150.20:FF:000002">
    <property type="entry name" value="50S ribosomal protein L14, chloroplastic"/>
    <property type="match status" value="1"/>
</dbReference>
<dbReference type="Gene3D" id="2.40.150.20">
    <property type="entry name" value="Ribosomal protein L14"/>
    <property type="match status" value="1"/>
</dbReference>
<dbReference type="HAMAP" id="MF_01367">
    <property type="entry name" value="Ribosomal_uL14"/>
    <property type="match status" value="1"/>
</dbReference>
<dbReference type="InterPro" id="IPR000218">
    <property type="entry name" value="Ribosomal_uL14"/>
</dbReference>
<dbReference type="InterPro" id="IPR005745">
    <property type="entry name" value="Ribosomal_uL14_bac-type"/>
</dbReference>
<dbReference type="InterPro" id="IPR019972">
    <property type="entry name" value="Ribosomal_uL14_CS"/>
</dbReference>
<dbReference type="InterPro" id="IPR036853">
    <property type="entry name" value="Ribosomal_uL14_sf"/>
</dbReference>
<dbReference type="NCBIfam" id="TIGR01067">
    <property type="entry name" value="rplN_bact"/>
    <property type="match status" value="1"/>
</dbReference>
<dbReference type="PANTHER" id="PTHR11761">
    <property type="entry name" value="50S/60S RIBOSOMAL PROTEIN L14/L23"/>
    <property type="match status" value="1"/>
</dbReference>
<dbReference type="PANTHER" id="PTHR11761:SF3">
    <property type="entry name" value="LARGE RIBOSOMAL SUBUNIT PROTEIN UL14M"/>
    <property type="match status" value="1"/>
</dbReference>
<dbReference type="Pfam" id="PF00238">
    <property type="entry name" value="Ribosomal_L14"/>
    <property type="match status" value="1"/>
</dbReference>
<dbReference type="SMART" id="SM01374">
    <property type="entry name" value="Ribosomal_L14"/>
    <property type="match status" value="1"/>
</dbReference>
<dbReference type="SUPFAM" id="SSF50193">
    <property type="entry name" value="Ribosomal protein L14"/>
    <property type="match status" value="1"/>
</dbReference>
<dbReference type="PROSITE" id="PS00049">
    <property type="entry name" value="RIBOSOMAL_L14"/>
    <property type="match status" value="1"/>
</dbReference>
<proteinExistence type="inferred from homology"/>
<accession>A1E9W1</accession>
<gene>
    <name evidence="1" type="primary">rpl14</name>
</gene>
<reference key="1">
    <citation type="journal article" date="2007" name="Theor. Appl. Genet.">
        <title>Complete chloroplast genome sequences of Hordeum vulgare, Sorghum bicolor and Agrostis stolonifera, and comparative analyses with other grass genomes.</title>
        <authorList>
            <person name="Saski C."/>
            <person name="Lee S.-B."/>
            <person name="Fjellheim S."/>
            <person name="Guda C."/>
            <person name="Jansen R.K."/>
            <person name="Luo H."/>
            <person name="Tomkins J."/>
            <person name="Rognli O.A."/>
            <person name="Daniell H."/>
            <person name="Clarke J.L."/>
        </authorList>
    </citation>
    <scope>NUCLEOTIDE SEQUENCE [LARGE SCALE GENOMIC DNA]</scope>
    <source>
        <strain>cv. BTx623</strain>
    </source>
</reference>
<name>RK14_SORBI</name>
<comment type="function">
    <text evidence="1">Binds to 23S rRNA.</text>
</comment>
<comment type="subunit">
    <text evidence="1">Part of the 50S ribosomal subunit.</text>
</comment>
<comment type="subcellular location">
    <subcellularLocation>
        <location>Plastid</location>
        <location>Chloroplast</location>
    </subcellularLocation>
</comment>
<comment type="similarity">
    <text evidence="1">Belongs to the universal ribosomal protein uL14 family.</text>
</comment>
<keyword id="KW-0150">Chloroplast</keyword>
<keyword id="KW-0934">Plastid</keyword>
<keyword id="KW-1185">Reference proteome</keyword>
<keyword id="KW-0687">Ribonucleoprotein</keyword>
<keyword id="KW-0689">Ribosomal protein</keyword>
<keyword id="KW-0694">RNA-binding</keyword>
<keyword id="KW-0699">rRNA-binding</keyword>
<evidence type="ECO:0000255" key="1">
    <source>
        <dbReference type="HAMAP-Rule" id="MF_01367"/>
    </source>
</evidence>
<evidence type="ECO:0000305" key="2"/>
<protein>
    <recommendedName>
        <fullName evidence="1">Large ribosomal subunit protein uL14c</fullName>
    </recommendedName>
    <alternativeName>
        <fullName evidence="2">50S ribosomal protein L14, chloroplastic</fullName>
    </alternativeName>
</protein>
<geneLocation type="chloroplast"/>
<sequence length="123" mass="13528">MIQPQTLLNVADNSGARKLMCIRVIGAAGNQRYARIGDVIIAVIKDAVPKMPLERSEVIRAVIVRTRKEFKGDDGIIIRYDDNAAVIIDQKGNPKGTRVFGAVAEELRELNFTKIVSLAPEVL</sequence>